<evidence type="ECO:0000255" key="1">
    <source>
        <dbReference type="HAMAP-Rule" id="MF_00652"/>
    </source>
</evidence>
<name>Y1772_STRPM</name>
<protein>
    <recommendedName>
        <fullName evidence="1">UPF0246 protein M28_Spy1772</fullName>
    </recommendedName>
</protein>
<gene>
    <name type="ordered locus">M28_Spy1772</name>
</gene>
<sequence length="243" mass="28312">MLTFLIPTAKEMMIPKESHPHLLPQDSQAILKIMAAMTTEDLAKSYRIKEEAAKKEQQRWQDMASQQNLAYPAYQLFNGLMYRHIKRDKLTTQEQAYLTQQVYITSSFYGIIPANHPIAEHRHDFHTRIKIEGQSLKSYWRPCYNQFAKEHPQVISLLSSEFDDVFSKDCKQLWISPKFMAEKEGQFKTHSTISKKARGAFLTACMENNCQTVDSLKSLVFAGFYYHPDLSTDHEFVYIKKEA</sequence>
<feature type="chain" id="PRO_0000262070" description="UPF0246 protein M28_Spy1772">
    <location>
        <begin position="1"/>
        <end position="243"/>
    </location>
</feature>
<dbReference type="EMBL" id="CP000056">
    <property type="protein sequence ID" value="AAX72882.1"/>
    <property type="molecule type" value="Genomic_DNA"/>
</dbReference>
<dbReference type="RefSeq" id="WP_011285261.1">
    <property type="nucleotide sequence ID" value="NC_007296.2"/>
</dbReference>
<dbReference type="SMR" id="Q48QX8"/>
<dbReference type="KEGG" id="spb:M28_Spy1772"/>
<dbReference type="HOGENOM" id="CLU_061989_2_1_9"/>
<dbReference type="GO" id="GO:0005829">
    <property type="term" value="C:cytosol"/>
    <property type="evidence" value="ECO:0007669"/>
    <property type="project" value="TreeGrafter"/>
</dbReference>
<dbReference type="GO" id="GO:0033194">
    <property type="term" value="P:response to hydroperoxide"/>
    <property type="evidence" value="ECO:0007669"/>
    <property type="project" value="TreeGrafter"/>
</dbReference>
<dbReference type="HAMAP" id="MF_00652">
    <property type="entry name" value="UPF0246"/>
    <property type="match status" value="1"/>
</dbReference>
<dbReference type="InterPro" id="IPR005583">
    <property type="entry name" value="YaaA"/>
</dbReference>
<dbReference type="NCBIfam" id="NF002543">
    <property type="entry name" value="PRK02101.1-4"/>
    <property type="match status" value="1"/>
</dbReference>
<dbReference type="PANTHER" id="PTHR30283:SF4">
    <property type="entry name" value="PEROXIDE STRESS RESISTANCE PROTEIN YAAA"/>
    <property type="match status" value="1"/>
</dbReference>
<dbReference type="PANTHER" id="PTHR30283">
    <property type="entry name" value="PEROXIDE STRESS RESPONSE PROTEIN YAAA"/>
    <property type="match status" value="1"/>
</dbReference>
<dbReference type="Pfam" id="PF03883">
    <property type="entry name" value="H2O2_YaaD"/>
    <property type="match status" value="1"/>
</dbReference>
<reference key="1">
    <citation type="journal article" date="2005" name="J. Infect. Dis.">
        <title>Genome sequence of a serotype M28 strain of group A Streptococcus: potential new insights into puerperal sepsis and bacterial disease specificity.</title>
        <authorList>
            <person name="Green N.M."/>
            <person name="Zhang S."/>
            <person name="Porcella S.F."/>
            <person name="Nagiec M.J."/>
            <person name="Barbian K.D."/>
            <person name="Beres S.B."/>
            <person name="Lefebvre R.B."/>
            <person name="Musser J.M."/>
        </authorList>
    </citation>
    <scope>NUCLEOTIDE SEQUENCE [LARGE SCALE GENOMIC DNA]</scope>
    <source>
        <strain>MGAS6180</strain>
    </source>
</reference>
<comment type="similarity">
    <text evidence="1">Belongs to the UPF0246 family.</text>
</comment>
<accession>Q48QX8</accession>
<proteinExistence type="inferred from homology"/>
<organism>
    <name type="scientific">Streptococcus pyogenes serotype M28 (strain MGAS6180)</name>
    <dbReference type="NCBI Taxonomy" id="319701"/>
    <lineage>
        <taxon>Bacteria</taxon>
        <taxon>Bacillati</taxon>
        <taxon>Bacillota</taxon>
        <taxon>Bacilli</taxon>
        <taxon>Lactobacillales</taxon>
        <taxon>Streptococcaceae</taxon>
        <taxon>Streptococcus</taxon>
    </lineage>
</organism>